<comment type="function">
    <text evidence="1">Catalyzes the strictly specific dephosphorylation of 2'-deoxyribonucleoside 5'-monophosphates.</text>
</comment>
<comment type="catalytic activity">
    <reaction evidence="1">
        <text>a 2'-deoxyribonucleoside 5'-phosphate + H2O = a 2'-deoxyribonucleoside + phosphate</text>
        <dbReference type="Rhea" id="RHEA:36167"/>
        <dbReference type="ChEBI" id="CHEBI:15377"/>
        <dbReference type="ChEBI" id="CHEBI:18274"/>
        <dbReference type="ChEBI" id="CHEBI:43474"/>
        <dbReference type="ChEBI" id="CHEBI:65317"/>
        <dbReference type="EC" id="3.1.3.89"/>
    </reaction>
</comment>
<comment type="cofactor">
    <cofactor evidence="1">
        <name>a divalent metal cation</name>
        <dbReference type="ChEBI" id="CHEBI:60240"/>
    </cofactor>
</comment>
<comment type="subunit">
    <text evidence="1">Homodimer.</text>
</comment>
<comment type="subcellular location">
    <subcellularLocation>
        <location evidence="1">Cytoplasm</location>
    </subcellularLocation>
</comment>
<comment type="similarity">
    <text evidence="1">Belongs to the 5DNU family.</text>
</comment>
<protein>
    <recommendedName>
        <fullName evidence="1">5'-deoxynucleotidase PM0747</fullName>
        <ecNumber evidence="1">3.1.3.89</ecNumber>
    </recommendedName>
    <alternativeName>
        <fullName evidence="1">5'-deoxyribonucleotidase</fullName>
    </alternativeName>
    <alternativeName>
        <fullName evidence="1">Nucleoside 5'-monophosphate phosphohydrolase</fullName>
    </alternativeName>
</protein>
<feature type="chain" id="PRO_0000095053" description="5'-deoxynucleotidase PM0747">
    <location>
        <begin position="1"/>
        <end position="195"/>
    </location>
</feature>
<feature type="domain" description="HD" evidence="2">
    <location>
        <begin position="30"/>
        <end position="142"/>
    </location>
</feature>
<feature type="binding site" evidence="1">
    <location>
        <begin position="18"/>
        <end position="19"/>
    </location>
    <ligand>
        <name>substrate</name>
    </ligand>
</feature>
<feature type="binding site" evidence="1">
    <location>
        <position position="33"/>
    </location>
    <ligand>
        <name>a divalent metal cation</name>
        <dbReference type="ChEBI" id="CHEBI:60240"/>
    </ligand>
</feature>
<feature type="binding site" evidence="1">
    <location>
        <position position="33"/>
    </location>
    <ligand>
        <name>substrate</name>
    </ligand>
</feature>
<feature type="binding site" evidence="1">
    <location>
        <position position="68"/>
    </location>
    <ligand>
        <name>a divalent metal cation</name>
        <dbReference type="ChEBI" id="CHEBI:60240"/>
    </ligand>
</feature>
<feature type="binding site" evidence="1">
    <location>
        <position position="69"/>
    </location>
    <ligand>
        <name>a divalent metal cation</name>
        <dbReference type="ChEBI" id="CHEBI:60240"/>
    </ligand>
</feature>
<feature type="binding site" evidence="1">
    <location>
        <position position="69"/>
    </location>
    <ligand>
        <name>substrate</name>
    </ligand>
</feature>
<feature type="binding site" evidence="1">
    <location>
        <begin position="77"/>
        <end position="80"/>
    </location>
    <ligand>
        <name>substrate</name>
    </ligand>
</feature>
<feature type="binding site" evidence="1">
    <location>
        <position position="137"/>
    </location>
    <ligand>
        <name>a divalent metal cation</name>
        <dbReference type="ChEBI" id="CHEBI:60240"/>
    </ligand>
</feature>
<feature type="binding site" evidence="1">
    <location>
        <position position="137"/>
    </location>
    <ligand>
        <name>substrate</name>
    </ligand>
</feature>
<feature type="site" description="Appears to be important in orienting the phosphate for catalysis" evidence="1">
    <location>
        <position position="18"/>
    </location>
</feature>
<proteinExistence type="inferred from homology"/>
<gene>
    <name type="ordered locus">PM0747</name>
</gene>
<organism>
    <name type="scientific">Pasteurella multocida (strain Pm70)</name>
    <dbReference type="NCBI Taxonomy" id="272843"/>
    <lineage>
        <taxon>Bacteria</taxon>
        <taxon>Pseudomonadati</taxon>
        <taxon>Pseudomonadota</taxon>
        <taxon>Gammaproteobacteria</taxon>
        <taxon>Pasteurellales</taxon>
        <taxon>Pasteurellaceae</taxon>
        <taxon>Pasteurella</taxon>
    </lineage>
</organism>
<sequence length="195" mass="22563">MKISHFFACLDRLRLIQRWSLMRNIEKENLAEHSLQVAFVAHALAVIKNKFYQGHLNPDRIAVMAMYHDTSEIFTGDLPTPIKYFNPKITQAYKEIENAAEAHLLALLPKELQADFAPYLDSTQFSAQEKHVVKQADLICAYVKAQFELENGNQEFKAAKARLETLMKTWHSDEMRYFIEVFIPSFGKPIDEITL</sequence>
<reference key="1">
    <citation type="journal article" date="2001" name="Proc. Natl. Acad. Sci. U.S.A.">
        <title>Complete genomic sequence of Pasteurella multocida Pm70.</title>
        <authorList>
            <person name="May B.J."/>
            <person name="Zhang Q."/>
            <person name="Li L.L."/>
            <person name="Paustian M.L."/>
            <person name="Whittam T.S."/>
            <person name="Kapur V."/>
        </authorList>
    </citation>
    <scope>NUCLEOTIDE SEQUENCE [LARGE SCALE GENOMIC DNA]</scope>
    <source>
        <strain>Pm70</strain>
    </source>
</reference>
<dbReference type="EC" id="3.1.3.89" evidence="1"/>
<dbReference type="EMBL" id="AE004439">
    <property type="protein sequence ID" value="AAK02831.1"/>
    <property type="molecule type" value="Genomic_DNA"/>
</dbReference>
<dbReference type="SMR" id="Q9CMR5"/>
<dbReference type="STRING" id="272843.PM0747"/>
<dbReference type="EnsemblBacteria" id="AAK02831">
    <property type="protein sequence ID" value="AAK02831"/>
    <property type="gene ID" value="PM0747"/>
</dbReference>
<dbReference type="KEGG" id="pmu:PM0747"/>
<dbReference type="HOGENOM" id="CLU_084784_0_0_6"/>
<dbReference type="Proteomes" id="UP000000809">
    <property type="component" value="Chromosome"/>
</dbReference>
<dbReference type="GO" id="GO:0005737">
    <property type="term" value="C:cytoplasm"/>
    <property type="evidence" value="ECO:0007669"/>
    <property type="project" value="UniProtKB-SubCell"/>
</dbReference>
<dbReference type="GO" id="GO:0002953">
    <property type="term" value="F:5'-deoxynucleotidase activity"/>
    <property type="evidence" value="ECO:0007669"/>
    <property type="project" value="UniProtKB-EC"/>
</dbReference>
<dbReference type="GO" id="GO:0046872">
    <property type="term" value="F:metal ion binding"/>
    <property type="evidence" value="ECO:0007669"/>
    <property type="project" value="UniProtKB-KW"/>
</dbReference>
<dbReference type="GO" id="GO:0000166">
    <property type="term" value="F:nucleotide binding"/>
    <property type="evidence" value="ECO:0007669"/>
    <property type="project" value="UniProtKB-KW"/>
</dbReference>
<dbReference type="Gene3D" id="1.10.3210.10">
    <property type="entry name" value="Hypothetical protein af1432"/>
    <property type="match status" value="1"/>
</dbReference>
<dbReference type="HAMAP" id="MF_01100">
    <property type="entry name" value="5DNU"/>
    <property type="match status" value="1"/>
</dbReference>
<dbReference type="InterPro" id="IPR003607">
    <property type="entry name" value="HD/PDEase_dom"/>
</dbReference>
<dbReference type="InterPro" id="IPR006674">
    <property type="entry name" value="HD_domain"/>
</dbReference>
<dbReference type="InterPro" id="IPR022971">
    <property type="entry name" value="YfbR"/>
</dbReference>
<dbReference type="InterPro" id="IPR039356">
    <property type="entry name" value="YfbR/HDDC2"/>
</dbReference>
<dbReference type="NCBIfam" id="NF003009">
    <property type="entry name" value="PRK03826.1"/>
    <property type="match status" value="1"/>
</dbReference>
<dbReference type="PANTHER" id="PTHR11845">
    <property type="entry name" value="5'-DEOXYNUCLEOTIDASE HDDC2"/>
    <property type="match status" value="1"/>
</dbReference>
<dbReference type="PANTHER" id="PTHR11845:SF13">
    <property type="entry name" value="5'-DEOXYNUCLEOTIDASE HDDC2"/>
    <property type="match status" value="1"/>
</dbReference>
<dbReference type="Pfam" id="PF12917">
    <property type="entry name" value="YfbR-like"/>
    <property type="match status" value="1"/>
</dbReference>
<dbReference type="SMART" id="SM00471">
    <property type="entry name" value="HDc"/>
    <property type="match status" value="1"/>
</dbReference>
<dbReference type="SUPFAM" id="SSF109604">
    <property type="entry name" value="HD-domain/PDEase-like"/>
    <property type="match status" value="1"/>
</dbReference>
<dbReference type="PROSITE" id="PS51831">
    <property type="entry name" value="HD"/>
    <property type="match status" value="1"/>
</dbReference>
<keyword id="KW-0963">Cytoplasm</keyword>
<keyword id="KW-0378">Hydrolase</keyword>
<keyword id="KW-0479">Metal-binding</keyword>
<keyword id="KW-0547">Nucleotide-binding</keyword>
<keyword id="KW-1185">Reference proteome</keyword>
<accession>Q9CMR5</accession>
<name>5DNU_PASMU</name>
<evidence type="ECO:0000255" key="1">
    <source>
        <dbReference type="HAMAP-Rule" id="MF_01100"/>
    </source>
</evidence>
<evidence type="ECO:0000255" key="2">
    <source>
        <dbReference type="PROSITE-ProRule" id="PRU01175"/>
    </source>
</evidence>